<gene>
    <name type="primary">dps</name>
    <name type="ordered locus">MSMEG_6467</name>
    <name type="ordered locus">MSMEI_6295</name>
</gene>
<name>DPS_MYCS2</name>
<dbReference type="EC" id="1.16.-.-"/>
<dbReference type="EMBL" id="AY065628">
    <property type="protein sequence ID" value="AAL40885.1"/>
    <property type="molecule type" value="Genomic_DNA"/>
</dbReference>
<dbReference type="EMBL" id="CP000480">
    <property type="protein sequence ID" value="ABK75435.1"/>
    <property type="molecule type" value="Genomic_DNA"/>
</dbReference>
<dbReference type="EMBL" id="CP001663">
    <property type="protein sequence ID" value="AFP42721.1"/>
    <property type="molecule type" value="Genomic_DNA"/>
</dbReference>
<dbReference type="RefSeq" id="WP_003897878.1">
    <property type="nucleotide sequence ID" value="NZ_SIJM01000033.1"/>
</dbReference>
<dbReference type="RefSeq" id="YP_890680.1">
    <property type="nucleotide sequence ID" value="NC_008596.1"/>
</dbReference>
<dbReference type="PDB" id="5H46">
    <property type="method" value="X-ray"/>
    <property type="resolution" value="2.85 A"/>
    <property type="chains" value="A=9-157"/>
</dbReference>
<dbReference type="PDBsum" id="5H46"/>
<dbReference type="SMR" id="A0R692"/>
<dbReference type="STRING" id="246196.MSMEG_6467"/>
<dbReference type="PaxDb" id="246196-MSMEI_6295"/>
<dbReference type="KEGG" id="msb:LJ00_31965"/>
<dbReference type="KEGG" id="msg:MSMEI_6295"/>
<dbReference type="KEGG" id="msm:MSMEG_6467"/>
<dbReference type="PATRIC" id="fig|246196.19.peg.6290"/>
<dbReference type="eggNOG" id="COG0783">
    <property type="taxonomic scope" value="Bacteria"/>
</dbReference>
<dbReference type="OrthoDB" id="9797687at2"/>
<dbReference type="Proteomes" id="UP000000757">
    <property type="component" value="Chromosome"/>
</dbReference>
<dbReference type="Proteomes" id="UP000006158">
    <property type="component" value="Chromosome"/>
</dbReference>
<dbReference type="GO" id="GO:0005737">
    <property type="term" value="C:cytoplasm"/>
    <property type="evidence" value="ECO:0007669"/>
    <property type="project" value="UniProtKB-KW"/>
</dbReference>
<dbReference type="GO" id="GO:0009295">
    <property type="term" value="C:nucleoid"/>
    <property type="evidence" value="ECO:0007669"/>
    <property type="project" value="UniProtKB-SubCell"/>
</dbReference>
<dbReference type="GO" id="GO:0003677">
    <property type="term" value="F:DNA binding"/>
    <property type="evidence" value="ECO:0007669"/>
    <property type="project" value="UniProtKB-KW"/>
</dbReference>
<dbReference type="GO" id="GO:0008199">
    <property type="term" value="F:ferric iron binding"/>
    <property type="evidence" value="ECO:0007669"/>
    <property type="project" value="InterPro"/>
</dbReference>
<dbReference type="GO" id="GO:0016722">
    <property type="term" value="F:oxidoreductase activity, acting on metal ions"/>
    <property type="evidence" value="ECO:0007669"/>
    <property type="project" value="InterPro"/>
</dbReference>
<dbReference type="GO" id="GO:0006879">
    <property type="term" value="P:intracellular iron ion homeostasis"/>
    <property type="evidence" value="ECO:0007669"/>
    <property type="project" value="UniProtKB-KW"/>
</dbReference>
<dbReference type="CDD" id="cd01043">
    <property type="entry name" value="DPS"/>
    <property type="match status" value="1"/>
</dbReference>
<dbReference type="Gene3D" id="1.20.1260.10">
    <property type="match status" value="1"/>
</dbReference>
<dbReference type="InterPro" id="IPR002177">
    <property type="entry name" value="DPS_DNA-bd"/>
</dbReference>
<dbReference type="InterPro" id="IPR023188">
    <property type="entry name" value="DPS_DNA-bd_CS"/>
</dbReference>
<dbReference type="InterPro" id="IPR012347">
    <property type="entry name" value="Ferritin-like"/>
</dbReference>
<dbReference type="InterPro" id="IPR009078">
    <property type="entry name" value="Ferritin-like_SF"/>
</dbReference>
<dbReference type="InterPro" id="IPR008331">
    <property type="entry name" value="Ferritin_DPS_dom"/>
</dbReference>
<dbReference type="PANTHER" id="PTHR42932:SF3">
    <property type="entry name" value="DNA PROTECTION DURING STARVATION PROTEIN"/>
    <property type="match status" value="1"/>
</dbReference>
<dbReference type="PANTHER" id="PTHR42932">
    <property type="entry name" value="GENERAL STRESS PROTEIN 20U"/>
    <property type="match status" value="1"/>
</dbReference>
<dbReference type="Pfam" id="PF00210">
    <property type="entry name" value="Ferritin"/>
    <property type="match status" value="1"/>
</dbReference>
<dbReference type="PIRSF" id="PIRSF005900">
    <property type="entry name" value="Dps"/>
    <property type="match status" value="1"/>
</dbReference>
<dbReference type="PRINTS" id="PR01346">
    <property type="entry name" value="HELNAPAPROT"/>
</dbReference>
<dbReference type="SUPFAM" id="SSF47240">
    <property type="entry name" value="Ferritin-like"/>
    <property type="match status" value="1"/>
</dbReference>
<dbReference type="PROSITE" id="PS00818">
    <property type="entry name" value="DPS_1"/>
    <property type="match status" value="1"/>
</dbReference>
<evidence type="ECO:0000250" key="1"/>
<evidence type="ECO:0000256" key="2">
    <source>
        <dbReference type="SAM" id="MobiDB-lite"/>
    </source>
</evidence>
<evidence type="ECO:0000269" key="3">
    <source>
    </source>
</evidence>
<evidence type="ECO:0000305" key="4"/>
<evidence type="ECO:0007829" key="5">
    <source>
        <dbReference type="PDB" id="5H46"/>
    </source>
</evidence>
<protein>
    <recommendedName>
        <fullName>DNA protection during starvation protein</fullName>
        <ecNumber>1.16.-.-</ecNumber>
    </recommendedName>
</protein>
<keyword id="KW-0002">3D-structure</keyword>
<keyword id="KW-0963">Cytoplasm</keyword>
<keyword id="KW-0238">DNA-binding</keyword>
<keyword id="KW-0408">Iron</keyword>
<keyword id="KW-0409">Iron storage</keyword>
<keyword id="KW-0479">Metal-binding</keyword>
<keyword id="KW-0560">Oxidoreductase</keyword>
<keyword id="KW-1185">Reference proteome</keyword>
<accession>A0R692</accession>
<accession>I7GFT5</accession>
<accession>Q8VP75</accession>
<comment type="function">
    <text evidence="1">Protects DNA from oxidative damage by sequestering intracellular Fe(2+) ion and storing it in the form of Fe(3+) oxyhydroxide mineral. One hydrogen peroxide oxidizes two Fe(2+) ions, which prevents hydroxyl radical production by the Fenton reaction (By similarity). It protects DNA from hydroxyl radical-mediated cleavage. Binds DNA with no apparent sequence specificity without self-aggregation nor promotion of DNA condensation. Is unable to protect DNA from DNase-mediated cleavage (By similarity).</text>
</comment>
<comment type="catalytic activity">
    <reaction>
        <text>2 Fe(2+) + H2O2 + 2 H(+) = 2 Fe(3+) + 2 H2O</text>
        <dbReference type="Rhea" id="RHEA:48712"/>
        <dbReference type="ChEBI" id="CHEBI:15377"/>
        <dbReference type="ChEBI" id="CHEBI:15378"/>
        <dbReference type="ChEBI" id="CHEBI:16240"/>
        <dbReference type="ChEBI" id="CHEBI:29033"/>
        <dbReference type="ChEBI" id="CHEBI:29034"/>
    </reaction>
</comment>
<comment type="subunit">
    <text evidence="1">The 12 identical subunits form a hollow sphere into which the mineral iron core of up to 500 Fe(3+) can be deposited. Homododecamer.</text>
</comment>
<comment type="subcellular location">
    <subcellularLocation>
        <location evidence="1">Cytoplasm</location>
        <location evidence="1">Nucleoid</location>
    </subcellularLocation>
</comment>
<comment type="induction">
    <text evidence="3">Expressed preferentially under carbon starvation.</text>
</comment>
<comment type="similarity">
    <text evidence="4">Belongs to the Dps family.</text>
</comment>
<sequence>MTSFTIPGLSDKKASDVADLLQKQLSTYNDLHLTLKHVHWNVVGPNFIGVHEMIDPQVELVRGYADEVAERIATLGKSPKGTPGAIIKDRTWDDYSVERDTVQAHLAALDLVYNGVIEDTRKSIEKLEDLDLVSQDLLIAHAGELEKFQWFVRAHLESAGGQLTHEGQSTEKGAADKARRKSA</sequence>
<proteinExistence type="evidence at protein level"/>
<feature type="chain" id="PRO_0000293598" description="DNA protection during starvation protein">
    <location>
        <begin position="1"/>
        <end position="183"/>
    </location>
</feature>
<feature type="region of interest" description="Disordered" evidence="2">
    <location>
        <begin position="162"/>
        <end position="183"/>
    </location>
</feature>
<feature type="binding site" evidence="1">
    <location>
        <position position="39"/>
    </location>
    <ligand>
        <name>Fe cation</name>
        <dbReference type="ChEBI" id="CHEBI:24875"/>
        <label>1</label>
        <note>ligand shared between two dodecameric partners</note>
    </ligand>
</feature>
<feature type="binding site" description="in other chain" evidence="1">
    <location>
        <position position="66"/>
    </location>
    <ligand>
        <name>Fe cation</name>
        <dbReference type="ChEBI" id="CHEBI:24875"/>
        <label>1</label>
        <note>ligand shared between two dodecameric partners</note>
    </ligand>
</feature>
<feature type="binding site" description="in other chain" evidence="1">
    <location>
        <position position="70"/>
    </location>
    <ligand>
        <name>Fe cation</name>
        <dbReference type="ChEBI" id="CHEBI:24875"/>
        <label>1</label>
        <note>ligand shared between two dodecameric partners</note>
    </ligand>
</feature>
<feature type="binding site" evidence="1">
    <location>
        <position position="70"/>
    </location>
    <ligand>
        <name>Fe cation</name>
        <dbReference type="ChEBI" id="CHEBI:24875"/>
        <label>2</label>
    </ligand>
</feature>
<feature type="helix" evidence="5">
    <location>
        <begin position="13"/>
        <end position="41"/>
    </location>
</feature>
<feature type="helix" evidence="5">
    <location>
        <begin position="45"/>
        <end position="47"/>
    </location>
</feature>
<feature type="helix" evidence="5">
    <location>
        <begin position="48"/>
        <end position="75"/>
    </location>
</feature>
<feature type="helix" evidence="5">
    <location>
        <begin position="83"/>
        <end position="89"/>
    </location>
</feature>
<feature type="strand" evidence="5">
    <location>
        <begin position="98"/>
        <end position="101"/>
    </location>
</feature>
<feature type="helix" evidence="5">
    <location>
        <begin position="102"/>
        <end position="127"/>
    </location>
</feature>
<feature type="turn" evidence="5">
    <location>
        <begin position="128"/>
        <end position="130"/>
    </location>
</feature>
<feature type="helix" evidence="5">
    <location>
        <begin position="132"/>
        <end position="156"/>
    </location>
</feature>
<reference key="1">
    <citation type="journal article" date="2002" name="Protein Eng.">
        <title>Proteomics analysis of carbon-starved Mycobacterium smegmatis: induction of Dps-like protein.</title>
        <authorList>
            <person name="Gupta S."/>
            <person name="Pandit S.B."/>
            <person name="Srinivasan N."/>
            <person name="Chatterji D."/>
        </authorList>
    </citation>
    <scope>NUCLEOTIDE SEQUENCE [GENOMIC DNA]</scope>
    <scope>IDENTIFICATION BY MASS SPECTROMETRY</scope>
    <scope>INDUCTION</scope>
    <scope>INTERACTION WITH DNA</scope>
</reference>
<reference key="2">
    <citation type="submission" date="2006-10" db="EMBL/GenBank/DDBJ databases">
        <authorList>
            <person name="Fleischmann R.D."/>
            <person name="Dodson R.J."/>
            <person name="Haft D.H."/>
            <person name="Merkel J.S."/>
            <person name="Nelson W.C."/>
            <person name="Fraser C.M."/>
        </authorList>
    </citation>
    <scope>NUCLEOTIDE SEQUENCE [LARGE SCALE GENOMIC DNA]</scope>
    <source>
        <strain>ATCC 700084 / mc(2)155</strain>
    </source>
</reference>
<reference key="3">
    <citation type="journal article" date="2007" name="Genome Biol.">
        <title>Interrupted coding sequences in Mycobacterium smegmatis: authentic mutations or sequencing errors?</title>
        <authorList>
            <person name="Deshayes C."/>
            <person name="Perrodou E."/>
            <person name="Gallien S."/>
            <person name="Euphrasie D."/>
            <person name="Schaeffer C."/>
            <person name="Van-Dorsselaer A."/>
            <person name="Poch O."/>
            <person name="Lecompte O."/>
            <person name="Reyrat J.-M."/>
        </authorList>
    </citation>
    <scope>NUCLEOTIDE SEQUENCE [LARGE SCALE GENOMIC DNA]</scope>
    <source>
        <strain>ATCC 700084 / mc(2)155</strain>
    </source>
</reference>
<reference key="4">
    <citation type="journal article" date="2009" name="Genome Res.">
        <title>Ortho-proteogenomics: multiple proteomes investigation through orthology and a new MS-based protocol.</title>
        <authorList>
            <person name="Gallien S."/>
            <person name="Perrodou E."/>
            <person name="Carapito C."/>
            <person name="Deshayes C."/>
            <person name="Reyrat J.-M."/>
            <person name="Van Dorsselaer A."/>
            <person name="Poch O."/>
            <person name="Schaeffer C."/>
            <person name="Lecompte O."/>
        </authorList>
    </citation>
    <scope>NUCLEOTIDE SEQUENCE [LARGE SCALE GENOMIC DNA]</scope>
    <source>
        <strain>ATCC 700084 / mc(2)155</strain>
    </source>
</reference>
<organism>
    <name type="scientific">Mycolicibacterium smegmatis (strain ATCC 700084 / mc(2)155)</name>
    <name type="common">Mycobacterium smegmatis</name>
    <dbReference type="NCBI Taxonomy" id="246196"/>
    <lineage>
        <taxon>Bacteria</taxon>
        <taxon>Bacillati</taxon>
        <taxon>Actinomycetota</taxon>
        <taxon>Actinomycetes</taxon>
        <taxon>Mycobacteriales</taxon>
        <taxon>Mycobacteriaceae</taxon>
        <taxon>Mycolicibacterium</taxon>
    </lineage>
</organism>